<accession>P23214</accession>
<organismHost>
    <name type="scientific">Shigella flexneri</name>
    <dbReference type="NCBI Taxonomy" id="623"/>
</organismHost>
<organism>
    <name type="scientific">Shigella phage Sf6</name>
    <name type="common">Shigella flexneri bacteriophage VI</name>
    <name type="synonym">Bacteriophage SfVI</name>
    <dbReference type="NCBI Taxonomy" id="10761"/>
    <lineage>
        <taxon>Viruses</taxon>
        <taxon>Duplodnaviria</taxon>
        <taxon>Heunggongvirae</taxon>
        <taxon>Uroviricota</taxon>
        <taxon>Caudoviricetes</taxon>
        <taxon>Lederbergvirus</taxon>
    </lineage>
</organism>
<reference key="1">
    <citation type="journal article" date="1991" name="Mol. Microbiol.">
        <title>Molecular characterization of the O-acetyl transferase gene of converting bacteriophage SF6 that adds group antigen 6 to Shigella flexneri.</title>
        <authorList>
            <person name="Verma N.K."/>
            <person name="Brandt J.M."/>
            <person name="Verma D.J."/>
            <person name="Lindberg A.A."/>
        </authorList>
    </citation>
    <scope>NUCLEOTIDE SEQUENCE [GENOMIC DNA]</scope>
</reference>
<reference key="2">
    <citation type="journal article" date="1991" name="Gene">
        <title>The oac gene encoding a lipopolysaccharide O-antigen acetylase maps adjacent to the integrase-encoding gene on the genome of Shigella flexneri bacteriophage Sf6.</title>
        <authorList>
            <person name="Clark C.A."/>
            <person name="Beltrame J."/>
            <person name="Manning P.A."/>
        </authorList>
    </citation>
    <scope>NUCLEOTIDE SEQUENCE [GENOMIC DNA]</scope>
</reference>
<dbReference type="EC" id="2.3.1.-"/>
<dbReference type="EMBL" id="X56800">
    <property type="protein sequence ID" value="CAA40136.1"/>
    <property type="molecule type" value="Genomic_DNA"/>
</dbReference>
<dbReference type="EMBL" id="X59553">
    <property type="protein sequence ID" value="CAA42132.1"/>
    <property type="molecule type" value="Genomic_DNA"/>
</dbReference>
<dbReference type="SMR" id="P23214"/>
<dbReference type="GO" id="GO:0020002">
    <property type="term" value="C:host cell plasma membrane"/>
    <property type="evidence" value="ECO:0007669"/>
    <property type="project" value="UniProtKB-SubCell"/>
</dbReference>
<dbReference type="GO" id="GO:0016020">
    <property type="term" value="C:membrane"/>
    <property type="evidence" value="ECO:0007669"/>
    <property type="project" value="UniProtKB-KW"/>
</dbReference>
<dbReference type="GO" id="GO:0016747">
    <property type="term" value="F:acyltransferase activity, transferring groups other than amino-acyl groups"/>
    <property type="evidence" value="ECO:0007669"/>
    <property type="project" value="InterPro"/>
</dbReference>
<dbReference type="GO" id="GO:0000271">
    <property type="term" value="P:polysaccharide biosynthetic process"/>
    <property type="evidence" value="ECO:0007669"/>
    <property type="project" value="TreeGrafter"/>
</dbReference>
<dbReference type="InterPro" id="IPR002656">
    <property type="entry name" value="Acyl_transf_3_dom"/>
</dbReference>
<dbReference type="InterPro" id="IPR050879">
    <property type="entry name" value="Acyltransferase_3"/>
</dbReference>
<dbReference type="PANTHER" id="PTHR23028">
    <property type="entry name" value="ACETYLTRANSFERASE"/>
    <property type="match status" value="1"/>
</dbReference>
<dbReference type="PANTHER" id="PTHR23028:SF53">
    <property type="entry name" value="ACYL_TRANSF_3 DOMAIN-CONTAINING PROTEIN"/>
    <property type="match status" value="1"/>
</dbReference>
<dbReference type="Pfam" id="PF01757">
    <property type="entry name" value="Acyl_transf_3"/>
    <property type="match status" value="1"/>
</dbReference>
<evidence type="ECO:0000305" key="1"/>
<protein>
    <recommendedName>
        <fullName>O-acetyl transferase</fullName>
        <ecNumber>2.3.1.-</ecNumber>
    </recommendedName>
    <alternativeName>
        <fullName>O-antigen acetylase</fullName>
    </alternativeName>
</protein>
<name>OAC_BPSFV</name>
<gene>
    <name type="primary">OAC</name>
</gene>
<keyword id="KW-0012">Acyltransferase</keyword>
<keyword id="KW-1030">Host cell inner membrane</keyword>
<keyword id="KW-1032">Host cell membrane</keyword>
<keyword id="KW-1043">Host membrane</keyword>
<keyword id="KW-0472">Membrane</keyword>
<keyword id="KW-0808">Transferase</keyword>
<sequence length="333" mass="37186">MHKSNCFDTARLVAAMMVLVSHHYALSGQPEPYLFGFESAGGIAVIIFFSISGYLISKSAIRSDSFIDFMAKRARRIFPALVPCSILTYFLFGWILNDFSAEYFSHDIVRKTISSIFMSQAPDADITSHLIHAGINGSLWTLPLEFLCYIITGVAVAHLKNGKAFIVILLVFVSLSLIGSVSENRDVMFSIPLWLYPLRGLAFFFGATMAMYEKSWNVSNVKITVVSLLAMYAYASYGKGIDYTMTCYILVSFSTIAICTSVGDPLVKGRFDYSYGVYIYAFPVQQVVINTLHMGFYPSMLLSAVTVLFLSHLSWNLVEKRFLTRSSPKLSLD</sequence>
<proteinExistence type="inferred from homology"/>
<feature type="chain" id="PRO_0000208084" description="O-acetyl transferase">
    <location>
        <begin position="1"/>
        <end position="333"/>
    </location>
</feature>
<feature type="sequence conflict" description="In Ref. 2; CAA42132." evidence="1" ref="2">
    <original>H</original>
    <variation>L</variation>
    <location>
        <position position="158"/>
    </location>
</feature>
<feature type="sequence conflict" description="In Ref. 2; CAA42132." evidence="1" ref="2">
    <original>L</original>
    <variation>Q</variation>
    <location>
        <position position="169"/>
    </location>
</feature>
<comment type="function">
    <text>Antigenically converts S.flexneri serotype X to 3a, Y to 3b, 1a to 1b and 4a to 4b by O-acetylating the O-antigenic polysaccharide chain.</text>
</comment>
<comment type="subcellular location">
    <subcellularLocation>
        <location evidence="1">Host cell inner membrane</location>
        <topology evidence="1">Peripheral membrane protein</topology>
    </subcellularLocation>
    <text evidence="1">Inner membrane-associated.</text>
</comment>
<comment type="similarity">
    <text evidence="1">Belongs to the acyltransferase 3 family.</text>
</comment>